<proteinExistence type="evidence at transcript level"/>
<feature type="transit peptide" description="Mitochondrion" evidence="1">
    <location>
        <begin position="1"/>
        <end position="73"/>
    </location>
</feature>
<feature type="chain" id="PRO_0000440200" description="Mitochondrial-abundant heat soluble protein">
    <location>
        <begin position="74"/>
        <end position="236"/>
    </location>
</feature>
<feature type="region of interest" description="Disordered" evidence="2">
    <location>
        <begin position="102"/>
        <end position="135"/>
    </location>
</feature>
<feature type="region of interest" description="Disordered" evidence="2">
    <location>
        <begin position="165"/>
        <end position="209"/>
    </location>
</feature>
<feature type="short sequence motif" description="MAHS motif" evidence="6">
    <location>
        <begin position="126"/>
        <end position="143"/>
    </location>
</feature>
<feature type="compositionally biased region" description="Polar residues" evidence="2">
    <location>
        <begin position="105"/>
        <end position="126"/>
    </location>
</feature>
<feature type="compositionally biased region" description="Polar residues" evidence="2">
    <location>
        <begin position="192"/>
        <end position="202"/>
    </location>
</feature>
<accession>A0A1D1V3Z0</accession>
<accession>A0A0E4FH01</accession>
<sequence length="236" mass="25410">MSRYLLRDVQAVLRGVRKVAESSLKLETEKVSLRLGDFRSQPSLRSVPASLTSRSQAFSLQEIAARAGVVLRGVQQQFRNVTGVNAAPVVAFDNGSVLYSERIHSQSSQKQAPTTVPTGSVSNSPQPEGKANEAAERAKQFMNPPVAPMDPVDKNEFVAMPEMGRSNGNGENKQAADFMKNQGDTDMDSQYAPDSSKNTKSVPTKEIVAEDGSMSIEDIKKATQVTPGVAVKNEGV</sequence>
<gene>
    <name evidence="4" type="primary">MAHS</name>
    <name type="ORF">RvY_05157</name>
</gene>
<name>MAHS_RAMVA</name>
<organism>
    <name type="scientific">Ramazzottius varieornatus</name>
    <name type="common">Water bear</name>
    <name type="synonym">Tardigrade</name>
    <dbReference type="NCBI Taxonomy" id="947166"/>
    <lineage>
        <taxon>Eukaryota</taxon>
        <taxon>Metazoa</taxon>
        <taxon>Ecdysozoa</taxon>
        <taxon>Tardigrada</taxon>
        <taxon>Eutardigrada</taxon>
        <taxon>Parachela</taxon>
        <taxon>Hypsibioidea</taxon>
        <taxon>Ramazzottiidae</taxon>
        <taxon>Ramazzottius</taxon>
    </lineage>
</organism>
<keyword id="KW-0496">Mitochondrion</keyword>
<keyword id="KW-1185">Reference proteome</keyword>
<keyword id="KW-0346">Stress response</keyword>
<keyword id="KW-0809">Transit peptide</keyword>
<reference key="1">
    <citation type="journal article" date="2015" name="PLoS ONE">
        <title>Novel mitochondria-targeted heat-soluble proteins identified in the anhydrobiotic Tardigrade improve osmotic tolerance of human cells.</title>
        <authorList>
            <person name="Tanaka S."/>
            <person name="Tanaka J."/>
            <person name="Miwa Y."/>
            <person name="Horikawa D.D."/>
            <person name="Katayama T."/>
            <person name="Arakawa K."/>
            <person name="Toyoda A."/>
            <person name="Kubo T."/>
            <person name="Kunieda T."/>
        </authorList>
    </citation>
    <scope>NUCLEOTIDE SEQUENCE [MRNA]</scope>
    <scope>FUNCTION</scope>
    <scope>SUBCELLULAR LOCATION</scope>
    <scope>DOMAIN</scope>
    <source>
        <strain>YOKOZUNA-1</strain>
    </source>
</reference>
<reference key="2">
    <citation type="journal article" date="2016" name="Nat. Commun.">
        <title>Extremotolerant tardigrade genome and improved radiotolerance of human cultured cells by tardigrade-unique protein.</title>
        <authorList>
            <person name="Hashimoto T."/>
            <person name="Horikawa D.D."/>
            <person name="Saito Y."/>
            <person name="Kuwahara H."/>
            <person name="Kozuka-Hata H."/>
            <person name="Shin-I T."/>
            <person name="Minakuchi Y."/>
            <person name="Ohishi K."/>
            <person name="Motoyama A."/>
            <person name="Aizu T."/>
            <person name="Enomoto A."/>
            <person name="Kondo K."/>
            <person name="Tanaka S."/>
            <person name="Hara Y."/>
            <person name="Koshikawa S."/>
            <person name="Sagara H."/>
            <person name="Miura T."/>
            <person name="Yokobori S."/>
            <person name="Miyagawa K."/>
            <person name="Suzuki Y."/>
            <person name="Kubo T."/>
            <person name="Oyama M."/>
            <person name="Kohara Y."/>
            <person name="Fujiyama A."/>
            <person name="Arakawa K."/>
            <person name="Katayama T."/>
            <person name="Toyoda A."/>
            <person name="Kunieda T."/>
        </authorList>
    </citation>
    <scope>NUCLEOTIDE SEQUENCE [LARGE SCALE GENOMIC DNA]</scope>
    <source>
        <strain>YOKOZUNA-1</strain>
    </source>
</reference>
<comment type="function">
    <text evidence="3">Mitochondrial heat soluble protein acting as a molecular shield in water-deficient condition.</text>
</comment>
<comment type="subcellular location">
    <subcellularLocation>
        <location evidence="3">Mitochondrion</location>
    </subcellularLocation>
</comment>
<comment type="domain">
    <text evidence="6">The MAHS motif is conserved in tardigrade MAHS proteins and forms a predicted amphipathic helix (PubMed:25675104).</text>
</comment>
<comment type="miscellaneous">
    <text evidence="3">Improves osmotic tolerance of human cells (PubMed:25675104).</text>
</comment>
<comment type="sequence caution" evidence="5">
    <conflict type="erroneous initiation">
        <sequence resource="EMBL-CDS" id="GAU93178"/>
    </conflict>
    <text>Extended N-terminus.</text>
</comment>
<dbReference type="EMBL" id="LC002822">
    <property type="protein sequence ID" value="BAQ94587.1"/>
    <property type="molecule type" value="mRNA"/>
</dbReference>
<dbReference type="EMBL" id="BDGG01000002">
    <property type="protein sequence ID" value="GAU93178.1"/>
    <property type="status" value="ALT_INIT"/>
    <property type="molecule type" value="Genomic_DNA"/>
</dbReference>
<dbReference type="Proteomes" id="UP000186922">
    <property type="component" value="Unassembled WGS sequence"/>
</dbReference>
<dbReference type="GO" id="GO:0005739">
    <property type="term" value="C:mitochondrion"/>
    <property type="evidence" value="ECO:0007669"/>
    <property type="project" value="UniProtKB-SubCell"/>
</dbReference>
<protein>
    <recommendedName>
        <fullName evidence="4">Mitochondrial-abundant heat soluble protein</fullName>
        <shortName evidence="4">MAHS</shortName>
    </recommendedName>
</protein>
<evidence type="ECO:0000255" key="1"/>
<evidence type="ECO:0000256" key="2">
    <source>
        <dbReference type="SAM" id="MobiDB-lite"/>
    </source>
</evidence>
<evidence type="ECO:0000269" key="3">
    <source>
    </source>
</evidence>
<evidence type="ECO:0000303" key="4">
    <source>
    </source>
</evidence>
<evidence type="ECO:0000305" key="5"/>
<evidence type="ECO:0000305" key="6">
    <source>
    </source>
</evidence>